<sequence>MGIIDFLLALMQDMILSAIPAVGFAMVFNVPHRALPWCALLGALGHGSRMLMMSAGFNIEWSTFMASLLVGSIGIQWSRWYLAHPKVFTVAAVIPMFPGISAYTAMISAVKISHLGYSEPMMITLLTNFLKASSIVGALSIGLSVPGLWLYRKRPRV</sequence>
<organism>
    <name type="scientific">Salmonella gallinarum (strain 287/91 / NCTC 13346)</name>
    <dbReference type="NCBI Taxonomy" id="550538"/>
    <lineage>
        <taxon>Bacteria</taxon>
        <taxon>Pseudomonadati</taxon>
        <taxon>Pseudomonadota</taxon>
        <taxon>Gammaproteobacteria</taxon>
        <taxon>Enterobacterales</taxon>
        <taxon>Enterobacteriaceae</taxon>
        <taxon>Salmonella</taxon>
    </lineage>
</organism>
<evidence type="ECO:0000255" key="1">
    <source>
        <dbReference type="HAMAP-Rule" id="MF_01191"/>
    </source>
</evidence>
<comment type="function">
    <text evidence="1">Involved in succinate export with YjjP. Both proteins are required for export.</text>
</comment>
<comment type="subunit">
    <text evidence="1">The transporter is composed of YjjB and YjjP.</text>
</comment>
<comment type="subcellular location">
    <subcellularLocation>
        <location evidence="1">Cell inner membrane</location>
        <topology evidence="1">Multi-pass membrane protein</topology>
    </subcellularLocation>
</comment>
<comment type="similarity">
    <text evidence="1">Belongs to the ThrE exporter (TC 2.A.79) family.</text>
</comment>
<protein>
    <recommendedName>
        <fullName evidence="1">Probable succinate transporter subunit YjjB</fullName>
    </recommendedName>
</protein>
<reference key="1">
    <citation type="journal article" date="2008" name="Genome Res.">
        <title>Comparative genome analysis of Salmonella enteritidis PT4 and Salmonella gallinarum 287/91 provides insights into evolutionary and host adaptation pathways.</title>
        <authorList>
            <person name="Thomson N.R."/>
            <person name="Clayton D.J."/>
            <person name="Windhorst D."/>
            <person name="Vernikos G."/>
            <person name="Davidson S."/>
            <person name="Churcher C."/>
            <person name="Quail M.A."/>
            <person name="Stevens M."/>
            <person name="Jones M.A."/>
            <person name="Watson M."/>
            <person name="Barron A."/>
            <person name="Layton A."/>
            <person name="Pickard D."/>
            <person name="Kingsley R.A."/>
            <person name="Bignell A."/>
            <person name="Clark L."/>
            <person name="Harris B."/>
            <person name="Ormond D."/>
            <person name="Abdellah Z."/>
            <person name="Brooks K."/>
            <person name="Cherevach I."/>
            <person name="Chillingworth T."/>
            <person name="Woodward J."/>
            <person name="Norberczak H."/>
            <person name="Lord A."/>
            <person name="Arrowsmith C."/>
            <person name="Jagels K."/>
            <person name="Moule S."/>
            <person name="Mungall K."/>
            <person name="Saunders M."/>
            <person name="Whitehead S."/>
            <person name="Chabalgoity J.A."/>
            <person name="Maskell D."/>
            <person name="Humphreys T."/>
            <person name="Roberts M."/>
            <person name="Barrow P.A."/>
            <person name="Dougan G."/>
            <person name="Parkhill J."/>
        </authorList>
    </citation>
    <scope>NUCLEOTIDE SEQUENCE [LARGE SCALE GENOMIC DNA]</scope>
    <source>
        <strain>287/91 / NCTC 13346</strain>
    </source>
</reference>
<keyword id="KW-0997">Cell inner membrane</keyword>
<keyword id="KW-1003">Cell membrane</keyword>
<keyword id="KW-0472">Membrane</keyword>
<keyword id="KW-0812">Transmembrane</keyword>
<keyword id="KW-1133">Transmembrane helix</keyword>
<keyword id="KW-0813">Transport</keyword>
<proteinExistence type="inferred from homology"/>
<feature type="chain" id="PRO_1000138372" description="Probable succinate transporter subunit YjjB">
    <location>
        <begin position="1"/>
        <end position="157"/>
    </location>
</feature>
<feature type="transmembrane region" description="Helical" evidence="1">
    <location>
        <begin position="8"/>
        <end position="28"/>
    </location>
</feature>
<feature type="transmembrane region" description="Helical" evidence="1">
    <location>
        <begin position="55"/>
        <end position="75"/>
    </location>
</feature>
<feature type="transmembrane region" description="Helical" evidence="1">
    <location>
        <begin position="87"/>
        <end position="107"/>
    </location>
</feature>
<feature type="transmembrane region" description="Helical" evidence="1">
    <location>
        <begin position="129"/>
        <end position="149"/>
    </location>
</feature>
<name>YJJB_SALG2</name>
<accession>B5R9T1</accession>
<dbReference type="EMBL" id="AM933173">
    <property type="protein sequence ID" value="CAR40137.1"/>
    <property type="molecule type" value="Genomic_DNA"/>
</dbReference>
<dbReference type="RefSeq" id="WP_000511329.1">
    <property type="nucleotide sequence ID" value="NC_011274.1"/>
</dbReference>
<dbReference type="KEGG" id="seg:SG4375"/>
<dbReference type="HOGENOM" id="CLU_117642_1_0_6"/>
<dbReference type="Proteomes" id="UP000008321">
    <property type="component" value="Chromosome"/>
</dbReference>
<dbReference type="GO" id="GO:0005886">
    <property type="term" value="C:plasma membrane"/>
    <property type="evidence" value="ECO:0007669"/>
    <property type="project" value="UniProtKB-SubCell"/>
</dbReference>
<dbReference type="GO" id="GO:0015744">
    <property type="term" value="P:succinate transport"/>
    <property type="evidence" value="ECO:0007669"/>
    <property type="project" value="UniProtKB-UniRule"/>
</dbReference>
<dbReference type="HAMAP" id="MF_01191">
    <property type="entry name" value="YjjB"/>
    <property type="match status" value="1"/>
</dbReference>
<dbReference type="InterPro" id="IPR024528">
    <property type="entry name" value="ThrE_2"/>
</dbReference>
<dbReference type="InterPro" id="IPR050539">
    <property type="entry name" value="ThrE_Dicarb/AminoAcid_Exp"/>
</dbReference>
<dbReference type="InterPro" id="IPR020914">
    <property type="entry name" value="YjjB"/>
</dbReference>
<dbReference type="NCBIfam" id="NF007391">
    <property type="entry name" value="PRK09917.1"/>
    <property type="match status" value="1"/>
</dbReference>
<dbReference type="PANTHER" id="PTHR34390:SF1">
    <property type="entry name" value="SUCCINATE TRANSPORTER SUBUNIT YJJB-RELATED"/>
    <property type="match status" value="1"/>
</dbReference>
<dbReference type="PANTHER" id="PTHR34390">
    <property type="entry name" value="UPF0442 PROTEIN YJJB-RELATED"/>
    <property type="match status" value="1"/>
</dbReference>
<dbReference type="Pfam" id="PF12821">
    <property type="entry name" value="ThrE_2"/>
    <property type="match status" value="1"/>
</dbReference>
<gene>
    <name evidence="1" type="primary">yjjB</name>
    <name type="ordered locus">SG4375</name>
</gene>